<evidence type="ECO:0000255" key="1">
    <source>
        <dbReference type="HAMAP-Rule" id="MF_00754"/>
    </source>
</evidence>
<evidence type="ECO:0000269" key="2">
    <source>
    </source>
</evidence>
<evidence type="ECO:0000269" key="3">
    <source>
    </source>
</evidence>
<evidence type="ECO:0000269" key="4">
    <source>
    </source>
</evidence>
<evidence type="ECO:0000269" key="5">
    <source>
    </source>
</evidence>
<evidence type="ECO:0007829" key="6">
    <source>
        <dbReference type="PDB" id="1V76"/>
    </source>
</evidence>
<evidence type="ECO:0007829" key="7">
    <source>
        <dbReference type="PDB" id="2ZAE"/>
    </source>
</evidence>
<feature type="chain" id="PRO_0000128437" description="Ribonuclease P protein component 1">
    <location>
        <begin position="1"/>
        <end position="127"/>
    </location>
</feature>
<feature type="mutagenesis site" description="Does not reconstitute RNase P activity, no longer interacts with Rnp4." evidence="5">
    <location>
        <begin position="1"/>
        <end position="31"/>
    </location>
</feature>
<feature type="mutagenesis site" description="Fully reconstitutes RNase P activity." evidence="5">
    <original>E</original>
    <variation>A</variation>
    <location>
        <position position="47"/>
    </location>
</feature>
<feature type="mutagenesis site" description="40% reconstituted RNase P activity." evidence="5">
    <original>E</original>
    <variation>A</variation>
    <location>
        <position position="73"/>
    </location>
</feature>
<feature type="mutagenesis site" description="40% reconstituted RNase P activity." evidence="5">
    <original>R</original>
    <variation>A</variation>
    <location>
        <position position="75"/>
    </location>
</feature>
<feature type="mutagenesis site" description="10% reconstituted RNase P activity." evidence="5">
    <original>K</original>
    <variation>A</variation>
    <location>
        <position position="90"/>
    </location>
</feature>
<feature type="mutagenesis site" description="75% reconstituted RNase P activity." evidence="5">
    <original>F</original>
    <variation>A</variation>
    <location>
        <position position="95"/>
    </location>
</feature>
<feature type="mutagenesis site" description="75% reconstituted RNase P activity." evidence="5">
    <original>R</original>
    <variation>A</variation>
    <location>
        <position position="115"/>
    </location>
</feature>
<feature type="mutagenesis site" description="Does not reconstitute RNase P activity." evidence="5">
    <location>
        <begin position="118"/>
        <end position="127"/>
    </location>
</feature>
<feature type="mutagenesis site" description="60% reconstituted RNase P activity." evidence="5">
    <original>KK</original>
    <variation>AA</variation>
    <location>
        <begin position="121"/>
        <end position="122"/>
    </location>
</feature>
<feature type="mutagenesis site" description="90% reconstituted RNase P activity." evidence="5">
    <original>K</original>
    <variation>A</variation>
    <location>
        <position position="121"/>
    </location>
</feature>
<feature type="mutagenesis site" description="Fully reconstitutes RNase P activity." evidence="5">
    <original>K</original>
    <variation>A</variation>
    <location>
        <position position="122"/>
    </location>
</feature>
<feature type="mutagenesis site" description="Fully reconstitutes RNase P activity." evidence="5">
    <location>
        <begin position="124"/>
        <end position="127"/>
    </location>
</feature>
<feature type="helix" evidence="7">
    <location>
        <begin position="21"/>
        <end position="23"/>
    </location>
</feature>
<feature type="helix" evidence="7">
    <location>
        <begin position="27"/>
        <end position="30"/>
    </location>
</feature>
<feature type="turn" evidence="7">
    <location>
        <begin position="31"/>
        <end position="33"/>
    </location>
</feature>
<feature type="helix" evidence="6">
    <location>
        <begin position="42"/>
        <end position="44"/>
    </location>
</feature>
<feature type="strand" evidence="6">
    <location>
        <begin position="52"/>
        <end position="60"/>
    </location>
</feature>
<feature type="helix" evidence="6">
    <location>
        <begin position="61"/>
        <end position="63"/>
    </location>
</feature>
<feature type="strand" evidence="6">
    <location>
        <begin position="67"/>
        <end position="73"/>
    </location>
</feature>
<feature type="strand" evidence="6">
    <location>
        <begin position="75"/>
        <end position="90"/>
    </location>
</feature>
<feature type="strand" evidence="6">
    <location>
        <begin position="93"/>
        <end position="98"/>
    </location>
</feature>
<feature type="strand" evidence="6">
    <location>
        <begin position="104"/>
        <end position="108"/>
    </location>
</feature>
<feature type="helix" evidence="6">
    <location>
        <begin position="109"/>
        <end position="112"/>
    </location>
</feature>
<feature type="helix" evidence="6">
    <location>
        <begin position="116"/>
        <end position="119"/>
    </location>
</feature>
<feature type="helix" evidence="6">
    <location>
        <begin position="120"/>
        <end position="123"/>
    </location>
</feature>
<protein>
    <recommendedName>
        <fullName evidence="1">Ribonuclease P protein component 1</fullName>
        <shortName evidence="1">RNase P component 1</shortName>
        <ecNumber evidence="1">3.1.26.5</ecNumber>
    </recommendedName>
    <alternativeName>
        <fullName evidence="1">Rpp29</fullName>
    </alternativeName>
</protein>
<name>RNP1_PYRHO</name>
<dbReference type="EC" id="3.1.26.5" evidence="1"/>
<dbReference type="EMBL" id="BA000001">
    <property type="protein sequence ID" value="BAA30886.1"/>
    <property type="molecule type" value="Genomic_DNA"/>
</dbReference>
<dbReference type="PIR" id="G71186">
    <property type="entry name" value="G71186"/>
</dbReference>
<dbReference type="RefSeq" id="WP_010885832.1">
    <property type="nucleotide sequence ID" value="NC_000961.1"/>
</dbReference>
<dbReference type="PDB" id="1V76">
    <property type="method" value="X-ray"/>
    <property type="resolution" value="2.00 A"/>
    <property type="chains" value="A/B=32-127"/>
</dbReference>
<dbReference type="PDB" id="2ZAE">
    <property type="method" value="X-ray"/>
    <property type="resolution" value="2.21 A"/>
    <property type="chains" value="A/C=1-127"/>
</dbReference>
<dbReference type="PDBsum" id="1V76"/>
<dbReference type="PDBsum" id="2ZAE"/>
<dbReference type="SMR" id="O59425"/>
<dbReference type="IntAct" id="O59425">
    <property type="interactions" value="1"/>
</dbReference>
<dbReference type="STRING" id="70601.gene:9378769"/>
<dbReference type="EnsemblBacteria" id="BAA30886">
    <property type="protein sequence ID" value="BAA30886"/>
    <property type="gene ID" value="BAA30886"/>
</dbReference>
<dbReference type="GeneID" id="1442614"/>
<dbReference type="KEGG" id="pho:PH1771"/>
<dbReference type="eggNOG" id="arCOG00784">
    <property type="taxonomic scope" value="Archaea"/>
</dbReference>
<dbReference type="OrthoDB" id="39019at2157"/>
<dbReference type="BRENDA" id="3.1.26.5">
    <property type="organism ID" value="5244"/>
</dbReference>
<dbReference type="EvolutionaryTrace" id="O59425"/>
<dbReference type="Proteomes" id="UP000000752">
    <property type="component" value="Chromosome"/>
</dbReference>
<dbReference type="GO" id="GO:0005737">
    <property type="term" value="C:cytoplasm"/>
    <property type="evidence" value="ECO:0007669"/>
    <property type="project" value="UniProtKB-SubCell"/>
</dbReference>
<dbReference type="GO" id="GO:0030677">
    <property type="term" value="C:ribonuclease P complex"/>
    <property type="evidence" value="ECO:0000314"/>
    <property type="project" value="UniProtKB"/>
</dbReference>
<dbReference type="GO" id="GO:0004526">
    <property type="term" value="F:ribonuclease P activity"/>
    <property type="evidence" value="ECO:0000314"/>
    <property type="project" value="UniProtKB"/>
</dbReference>
<dbReference type="GO" id="GO:0003723">
    <property type="term" value="F:RNA binding"/>
    <property type="evidence" value="ECO:0007669"/>
    <property type="project" value="InterPro"/>
</dbReference>
<dbReference type="GO" id="GO:0001682">
    <property type="term" value="P:tRNA 5'-leader removal"/>
    <property type="evidence" value="ECO:0000314"/>
    <property type="project" value="UniProtKB"/>
</dbReference>
<dbReference type="FunFam" id="2.30.30.210:FF:000015">
    <property type="entry name" value="Ribonuclease P protein component 1"/>
    <property type="match status" value="1"/>
</dbReference>
<dbReference type="Gene3D" id="2.30.30.210">
    <property type="entry name" value="Ribonuclease P/MRP, subunit p29"/>
    <property type="match status" value="1"/>
</dbReference>
<dbReference type="HAMAP" id="MF_00754">
    <property type="entry name" value="RNase_P_1"/>
    <property type="match status" value="1"/>
</dbReference>
<dbReference type="InterPro" id="IPR036980">
    <property type="entry name" value="RNase_P/MRP_Rpp29_sf"/>
</dbReference>
<dbReference type="InterPro" id="IPR023538">
    <property type="entry name" value="RNP1"/>
</dbReference>
<dbReference type="InterPro" id="IPR023534">
    <property type="entry name" value="Rof/RNase_P-like"/>
</dbReference>
<dbReference type="InterPro" id="IPR002730">
    <property type="entry name" value="Rpp29/RNP1"/>
</dbReference>
<dbReference type="NCBIfam" id="NF046110">
    <property type="entry name" value="RNaseP1Mthb"/>
    <property type="match status" value="1"/>
</dbReference>
<dbReference type="Pfam" id="PF01868">
    <property type="entry name" value="RNase_P-MRP_p29"/>
    <property type="match status" value="1"/>
</dbReference>
<dbReference type="SMART" id="SM00538">
    <property type="entry name" value="POP4"/>
    <property type="match status" value="1"/>
</dbReference>
<dbReference type="SUPFAM" id="SSF101744">
    <property type="entry name" value="Rof/RNase P subunit-like"/>
    <property type="match status" value="1"/>
</dbReference>
<reference key="1">
    <citation type="journal article" date="1998" name="DNA Res.">
        <title>Complete sequence and gene organization of the genome of a hyper-thermophilic archaebacterium, Pyrococcus horikoshii OT3.</title>
        <authorList>
            <person name="Kawarabayasi Y."/>
            <person name="Sawada M."/>
            <person name="Horikawa H."/>
            <person name="Haikawa Y."/>
            <person name="Hino Y."/>
            <person name="Yamamoto S."/>
            <person name="Sekine M."/>
            <person name="Baba S."/>
            <person name="Kosugi H."/>
            <person name="Hosoyama A."/>
            <person name="Nagai Y."/>
            <person name="Sakai M."/>
            <person name="Ogura K."/>
            <person name="Otsuka R."/>
            <person name="Nakazawa H."/>
            <person name="Takamiya M."/>
            <person name="Ohfuku Y."/>
            <person name="Funahashi T."/>
            <person name="Tanaka T."/>
            <person name="Kudoh Y."/>
            <person name="Yamazaki J."/>
            <person name="Kushida N."/>
            <person name="Oguchi A."/>
            <person name="Aoki K."/>
            <person name="Yoshizawa T."/>
            <person name="Nakamura Y."/>
            <person name="Robb F.T."/>
            <person name="Horikoshi K."/>
            <person name="Masuchi Y."/>
            <person name="Shizuya H."/>
            <person name="Kikuchi H."/>
        </authorList>
    </citation>
    <scope>NUCLEOTIDE SEQUENCE [LARGE SCALE GENOMIC DNA]</scope>
    <source>
        <strain>ATCC 700860 / DSM 12428 / JCM 9974 / NBRC 100139 / OT-3</strain>
    </source>
</reference>
<reference key="2">
    <citation type="journal article" date="2003" name="Biochem. Biophys. Res. Commun.">
        <title>Reconstitution of archaeal ribonuclease P from RNA and four protein components.</title>
        <authorList>
            <person name="Kouzuma Y."/>
            <person name="Mizoguchi M."/>
            <person name="Takagi H."/>
            <person name="Fukuhara H."/>
            <person name="Tsukamoto M."/>
            <person name="Numata T."/>
            <person name="Kimura M."/>
        </authorList>
    </citation>
    <scope>FUNCTION</scope>
    <scope>BIOPHYSICOCHEMICAL PROPERTIES</scope>
    <scope>SUBUNIT</scope>
    <scope>RNA-BINDING</scope>
    <source>
        <strain>ATCC 700860 / DSM 12428 / JCM 9974 / NBRC 100139 / OT-3</strain>
    </source>
</reference>
<reference key="3">
    <citation type="journal article" date="2006" name="Biochem. Biophys. Res. Commun.">
        <title>A fifth protein subunit Ph1496p elevates the optimum temperature for the ribonuclease P activity from Pyrococcus horikoshii OT3.</title>
        <authorList>
            <person name="Fukuhara H."/>
            <person name="Kifusa M."/>
            <person name="Watanabe M."/>
            <person name="Terada A."/>
            <person name="Honda T."/>
            <person name="Numata T."/>
            <person name="Kakuta Y."/>
            <person name="Kimura M."/>
        </authorList>
    </citation>
    <scope>FUNCTION</scope>
    <scope>BIOPHYSICOCHEMICAL PROPERTIES</scope>
    <scope>SUBUNIT</scope>
    <source>
        <strain>ATCC 700860 / DSM 12428 / JCM 9974 / NBRC 100139 / OT-3</strain>
    </source>
</reference>
<reference key="4">
    <citation type="journal article" date="2006" name="J. Biochem.">
        <title>Characterization of the archaeal ribonuclease P proteins from Pyrococcus horikoshii OT3.</title>
        <authorList>
            <person name="Terada A."/>
            <person name="Honda T."/>
            <person name="Fukuhara H."/>
            <person name="Hada K."/>
            <person name="Kimura M."/>
        </authorList>
    </citation>
    <scope>FUNCTION</scope>
    <scope>SUBUNIT</scope>
    <source>
        <strain>ATCC 700860 / DSM 12428 / JCM 9974 / NBRC 100139 / OT-3</strain>
    </source>
</reference>
<reference key="5">
    <citation type="journal article" date="2004" name="RNA">
        <title>Crystal structure of archaeal ribonuclease P protein Ph1771p from Pyrococcus horikoshii OT3: an archaeal homolog of eukaryotic ribonuclease P protein Rpp29.</title>
        <authorList>
            <person name="Numata T."/>
            <person name="Ishimatsu I."/>
            <person name="Kakuta Y."/>
            <person name="Tanaka I."/>
            <person name="Kimura M."/>
        </authorList>
    </citation>
    <scope>X-RAY CRYSTALLOGRAPHY (2.0 ANGSTROMS) OF 32-127</scope>
    <source>
        <strain>ATCC 700860 / DSM 12428 / JCM 9974 / NBRC 100139 / OT-3</strain>
    </source>
</reference>
<reference key="6">
    <citation type="journal article" date="2008" name="J. Mol. Biol.">
        <title>Structure of an archaeal homolog of the human protein complex Rpp21-Rpp29 that is a key core component for the assembly of active ribonuclease P.</title>
        <authorList>
            <person name="Honda T."/>
            <person name="Kakuta Y."/>
            <person name="Kimura K."/>
            <person name="Saho J."/>
            <person name="Kimura M."/>
        </authorList>
    </citation>
    <scope>X-RAY CRYSTALLOGRAPHY (2.21 ANGSTROMS) IN COMPLEX WITH RNP4</scope>
    <scope>FUNCTION</scope>
    <scope>SUBUNIT</scope>
    <scope>MUTAGENESIS OF 1-MET--ARG-31; GLU-47; GLU-73; ARG-75; LYS-90; PHE-95; ARG-115; 118-MET--TRP-127; LYS-121; 121-LYS-LYS-122; LYS-122 AND 124-TRP--TRP-127</scope>
</reference>
<proteinExistence type="evidence at protein level"/>
<gene>
    <name evidence="1" type="primary">rnp1</name>
    <name type="ordered locus">PH1771</name>
</gene>
<sequence>MRRNSKERKNRATRRSQGSYQEIIGRTWIFRGAHRGRVTRRNIIWHELIGLRVRIVGSTHPAFVGIEGYVIDETRNMLVIAGDRIWKVPKDVCIFEFEADDGTKIKIPGERLVGRPEMRLKKRWKKW</sequence>
<accession>O59425</accession>
<organism>
    <name type="scientific">Pyrococcus horikoshii (strain ATCC 700860 / DSM 12428 / JCM 9974 / NBRC 100139 / OT-3)</name>
    <dbReference type="NCBI Taxonomy" id="70601"/>
    <lineage>
        <taxon>Archaea</taxon>
        <taxon>Methanobacteriati</taxon>
        <taxon>Methanobacteriota</taxon>
        <taxon>Thermococci</taxon>
        <taxon>Thermococcales</taxon>
        <taxon>Thermococcaceae</taxon>
        <taxon>Pyrococcus</taxon>
    </lineage>
</organism>
<comment type="function">
    <text evidence="2 3 4 5">Part of ribonuclease P (RNase P), a protein complex that generates mature tRNA molecules by cleaving their 5'-ends. Binds RNase P RNA.</text>
</comment>
<comment type="catalytic activity">
    <reaction evidence="1">
        <text>Endonucleolytic cleavage of RNA, removing 5'-extranucleotides from tRNA precursor.</text>
        <dbReference type="EC" id="3.1.26.5"/>
    </reaction>
</comment>
<comment type="biophysicochemical properties">
    <temperatureDependence>
        <text evidence="2 3">Optimum temperature is 70 degrees Celsius.</text>
    </temperatureDependence>
</comment>
<comment type="subunit">
    <text evidence="2 3 4 5">Consists of a catalytic RNA component and at least 5 protein subunits. Forms a heterodimeric subcomplex with Rnp4. Reconstituted enzyme missing individual protein subunits is suboptimally active, showing each subunit contributes to optimization of activity.</text>
</comment>
<comment type="subcellular location">
    <subcellularLocation>
        <location evidence="1">Cytoplasm</location>
    </subcellularLocation>
</comment>
<comment type="similarity">
    <text evidence="1">Belongs to the eukaryotic/archaeal RNase P protein component 1 family.</text>
</comment>
<keyword id="KW-0002">3D-structure</keyword>
<keyword id="KW-0963">Cytoplasm</keyword>
<keyword id="KW-0255">Endonuclease</keyword>
<keyword id="KW-0378">Hydrolase</keyword>
<keyword id="KW-0540">Nuclease</keyword>
<keyword id="KW-0819">tRNA processing</keyword>